<dbReference type="EC" id="7.5.2.12" evidence="1"/>
<dbReference type="EMBL" id="AB241136">
    <property type="protein sequence ID" value="BAE94273.1"/>
    <property type="molecule type" value="Genomic_DNA"/>
</dbReference>
<dbReference type="SMR" id="Q1JUP7"/>
<dbReference type="GO" id="GO:0005886">
    <property type="term" value="C:plasma membrane"/>
    <property type="evidence" value="ECO:0007669"/>
    <property type="project" value="UniProtKB-SubCell"/>
</dbReference>
<dbReference type="GO" id="GO:0015612">
    <property type="term" value="F:ABC-type L-arabinose transporter activity"/>
    <property type="evidence" value="ECO:0007669"/>
    <property type="project" value="UniProtKB-EC"/>
</dbReference>
<dbReference type="GO" id="GO:0005524">
    <property type="term" value="F:ATP binding"/>
    <property type="evidence" value="ECO:0007669"/>
    <property type="project" value="UniProtKB-KW"/>
</dbReference>
<dbReference type="GO" id="GO:0016887">
    <property type="term" value="F:ATP hydrolysis activity"/>
    <property type="evidence" value="ECO:0007669"/>
    <property type="project" value="InterPro"/>
</dbReference>
<dbReference type="GO" id="GO:0042882">
    <property type="term" value="P:L-arabinose transmembrane transport"/>
    <property type="evidence" value="ECO:0000317"/>
    <property type="project" value="UniProtKB"/>
</dbReference>
<dbReference type="CDD" id="cd03216">
    <property type="entry name" value="ABC_Carb_Monos_I"/>
    <property type="match status" value="1"/>
</dbReference>
<dbReference type="CDD" id="cd03215">
    <property type="entry name" value="ABC_Carb_Monos_II"/>
    <property type="match status" value="1"/>
</dbReference>
<dbReference type="FunFam" id="3.40.50.300:FF:000126">
    <property type="entry name" value="Galactose/methyl galactoside import ATP-binding protein MglA"/>
    <property type="match status" value="1"/>
</dbReference>
<dbReference type="FunFam" id="3.40.50.300:FF:000127">
    <property type="entry name" value="Ribose import ATP-binding protein RbsA"/>
    <property type="match status" value="1"/>
</dbReference>
<dbReference type="Gene3D" id="3.40.50.300">
    <property type="entry name" value="P-loop containing nucleotide triphosphate hydrolases"/>
    <property type="match status" value="2"/>
</dbReference>
<dbReference type="InterPro" id="IPR003593">
    <property type="entry name" value="AAA+_ATPase"/>
</dbReference>
<dbReference type="InterPro" id="IPR050107">
    <property type="entry name" value="ABC_carbohydrate_import_ATPase"/>
</dbReference>
<dbReference type="InterPro" id="IPR003439">
    <property type="entry name" value="ABC_transporter-like_ATP-bd"/>
</dbReference>
<dbReference type="InterPro" id="IPR017871">
    <property type="entry name" value="ABC_transporter-like_CS"/>
</dbReference>
<dbReference type="InterPro" id="IPR027417">
    <property type="entry name" value="P-loop_NTPase"/>
</dbReference>
<dbReference type="NCBIfam" id="NF008442">
    <property type="entry name" value="PRK11288.1"/>
    <property type="match status" value="1"/>
</dbReference>
<dbReference type="PANTHER" id="PTHR43790:SF6">
    <property type="entry name" value="ARABINOSE IMPORT ATP-BINDING PROTEIN ARAG"/>
    <property type="match status" value="1"/>
</dbReference>
<dbReference type="PANTHER" id="PTHR43790">
    <property type="entry name" value="CARBOHYDRATE TRANSPORT ATP-BINDING PROTEIN MG119-RELATED"/>
    <property type="match status" value="1"/>
</dbReference>
<dbReference type="Pfam" id="PF00005">
    <property type="entry name" value="ABC_tran"/>
    <property type="match status" value="2"/>
</dbReference>
<dbReference type="SMART" id="SM00382">
    <property type="entry name" value="AAA"/>
    <property type="match status" value="2"/>
</dbReference>
<dbReference type="SUPFAM" id="SSF52540">
    <property type="entry name" value="P-loop containing nucleoside triphosphate hydrolases"/>
    <property type="match status" value="2"/>
</dbReference>
<dbReference type="PROSITE" id="PS00211">
    <property type="entry name" value="ABC_TRANSPORTER_1"/>
    <property type="match status" value="1"/>
</dbReference>
<dbReference type="PROSITE" id="PS50893">
    <property type="entry name" value="ABC_TRANSPORTER_2"/>
    <property type="match status" value="2"/>
</dbReference>
<dbReference type="PROSITE" id="PS51268">
    <property type="entry name" value="ARAG"/>
    <property type="match status" value="1"/>
</dbReference>
<organism>
    <name type="scientific">Azospirillum brasilense</name>
    <dbReference type="NCBI Taxonomy" id="192"/>
    <lineage>
        <taxon>Bacteria</taxon>
        <taxon>Pseudomonadati</taxon>
        <taxon>Pseudomonadota</taxon>
        <taxon>Alphaproteobacteria</taxon>
        <taxon>Rhodospirillales</taxon>
        <taxon>Azospirillaceae</taxon>
        <taxon>Azospirillum</taxon>
    </lineage>
</organism>
<name>ARAG_AZOBR</name>
<keyword id="KW-0067">ATP-binding</keyword>
<keyword id="KW-0997">Cell inner membrane</keyword>
<keyword id="KW-1003">Cell membrane</keyword>
<keyword id="KW-0472">Membrane</keyword>
<keyword id="KW-0547">Nucleotide-binding</keyword>
<keyword id="KW-0677">Repeat</keyword>
<keyword id="KW-0762">Sugar transport</keyword>
<keyword id="KW-1278">Translocase</keyword>
<keyword id="KW-0813">Transport</keyword>
<proteinExistence type="inferred from homology"/>
<protein>
    <recommendedName>
        <fullName evidence="1">Arabinose import ATP-binding protein AraG</fullName>
        <ecNumber evidence="1">7.5.2.12</ecNumber>
    </recommendedName>
</protein>
<gene>
    <name evidence="1" type="primary">araG</name>
    <name type="synonym">araY</name>
</gene>
<sequence>MTTQTMTAVSGNDGDTGGDAAESPPGGPLLALDGITVTFPGVRALDAVSLSVRAGEVHGLMGENGAGKSTLLKVLSGVNQPQAGTLTLNGTEQRFASTRAALEAGIAIIYQELHLVPELTVAENLMLGQLPSRLGVVDERTLAARALDALERLGEHIDPGIPVKYLSIGQRQMIEIGKALMRDARVIAFDEPTSSLSARETTQLFRIIRALRAEGRAIIYVTHRMEEVYELCDRVTVFRDGRRIDTFDSVTDLDRDRLIGCMVGRSIEDVYGYRPRAAGDVLIEAKGLAGPGLSEPVSFTARRGEIVGFFGLVGAGRSELMKLLYGAARPSAGHVELNGKRVAFGSPRDAVRAGLALCPEDRKQEGIVAIASVADNLNISARRHFSPARVLLDGRRERELAQRYIERLAIKTRDGDTPIGALSGGNQQKVVLARWLAERIDVFLMDEPTRGIDVGARAEIYNLFYELAEAGRTVILVSSDLAEVIGVSDRIIVMKEGRIAGEVAKAHATPDALIKLALPR</sequence>
<feature type="chain" id="PRO_0000270454" description="Arabinose import ATP-binding protein AraG">
    <location>
        <begin position="1"/>
        <end position="520"/>
    </location>
</feature>
<feature type="domain" description="ABC transporter 1" evidence="1">
    <location>
        <begin position="30"/>
        <end position="265"/>
    </location>
</feature>
<feature type="domain" description="ABC transporter 2" evidence="1">
    <location>
        <begin position="265"/>
        <end position="516"/>
    </location>
</feature>
<feature type="region of interest" description="Disordered" evidence="2">
    <location>
        <begin position="1"/>
        <end position="27"/>
    </location>
</feature>
<feature type="compositionally biased region" description="Polar residues" evidence="2">
    <location>
        <begin position="1"/>
        <end position="10"/>
    </location>
</feature>
<feature type="binding site" evidence="1">
    <location>
        <begin position="62"/>
        <end position="69"/>
    </location>
    <ligand>
        <name>ATP</name>
        <dbReference type="ChEBI" id="CHEBI:30616"/>
    </ligand>
</feature>
<comment type="function">
    <text evidence="3">Part of the ABC transporter complex AraFGH involved in L-arabinose import. Responsible for energy coupling to the transport system (Probable).</text>
</comment>
<comment type="catalytic activity">
    <reaction evidence="1">
        <text>L-arabinose(out) + ATP + H2O = L-arabinose(in) + ADP + phosphate + H(+)</text>
        <dbReference type="Rhea" id="RHEA:30007"/>
        <dbReference type="ChEBI" id="CHEBI:15377"/>
        <dbReference type="ChEBI" id="CHEBI:15378"/>
        <dbReference type="ChEBI" id="CHEBI:17535"/>
        <dbReference type="ChEBI" id="CHEBI:30616"/>
        <dbReference type="ChEBI" id="CHEBI:43474"/>
        <dbReference type="ChEBI" id="CHEBI:456216"/>
        <dbReference type="EC" id="7.5.2.12"/>
    </reaction>
</comment>
<comment type="subunit">
    <text evidence="1">The complex is composed of two ATP-binding proteins (AraG), two transmembrane proteins (AraH) and a solute-binding protein (AraF).</text>
</comment>
<comment type="subcellular location">
    <subcellularLocation>
        <location evidence="1">Cell inner membrane</location>
        <topology evidence="1">Peripheral membrane protein</topology>
    </subcellularLocation>
</comment>
<comment type="similarity">
    <text evidence="1">Belongs to the ABC transporter superfamily. Arabinose importer (TC 3.A.1.2.2) family.</text>
</comment>
<accession>Q1JUP7</accession>
<evidence type="ECO:0000255" key="1">
    <source>
        <dbReference type="HAMAP-Rule" id="MF_01721"/>
    </source>
</evidence>
<evidence type="ECO:0000256" key="2">
    <source>
        <dbReference type="SAM" id="MobiDB-lite"/>
    </source>
</evidence>
<evidence type="ECO:0000305" key="3"/>
<reference key="1">
    <citation type="journal article" date="2006" name="J. Biol. Chem.">
        <title>Identification and characterization of L-arabonate dehydratase, L-2-keto-3-deoxyarabonate dehydratase and L-arabinolactonase involved in an alternative pathway of L-arabinose metabolism: novel evolutionary insight into sugar metabolism.</title>
        <authorList>
            <person name="Watanabe S."/>
            <person name="Shimada N."/>
            <person name="Tajima K."/>
            <person name="Kodaki T."/>
            <person name="Makino K."/>
        </authorList>
    </citation>
    <scope>NUCLEOTIDE SEQUENCE [GENOMIC DNA]</scope>
    <scope>PROBABLE FUNCTION</scope>
    <source>
        <strain>ATCC 29145 / DSM 1690 / IMET 11303 / Sp7</strain>
    </source>
</reference>